<feature type="chain" id="PRO_0000244281" description="Ribosomal RNA small subunit methyltransferase J">
    <location>
        <begin position="1"/>
        <end position="218"/>
    </location>
</feature>
<feature type="binding site" evidence="1">
    <location>
        <begin position="55"/>
        <end position="56"/>
    </location>
    <ligand>
        <name>S-adenosyl-L-methionine</name>
        <dbReference type="ChEBI" id="CHEBI:59789"/>
    </ligand>
</feature>
<feature type="binding site" evidence="1">
    <location>
        <begin position="71"/>
        <end position="72"/>
    </location>
    <ligand>
        <name>S-adenosyl-L-methionine</name>
        <dbReference type="ChEBI" id="CHEBI:59789"/>
    </ligand>
</feature>
<feature type="binding site" evidence="1">
    <location>
        <position position="123"/>
    </location>
    <ligand>
        <name>S-adenosyl-L-methionine</name>
        <dbReference type="ChEBI" id="CHEBI:59789"/>
    </ligand>
</feature>
<evidence type="ECO:0000255" key="1">
    <source>
        <dbReference type="HAMAP-Rule" id="MF_01523"/>
    </source>
</evidence>
<name>RSMJ_RHOP2</name>
<reference key="1">
    <citation type="submission" date="2006-01" db="EMBL/GenBank/DDBJ databases">
        <title>Complete sequence of Rhodopseudomonas palustris HaA2.</title>
        <authorList>
            <consortium name="US DOE Joint Genome Institute"/>
            <person name="Copeland A."/>
            <person name="Lucas S."/>
            <person name="Lapidus A."/>
            <person name="Barry K."/>
            <person name="Detter J.C."/>
            <person name="Glavina T."/>
            <person name="Hammon N."/>
            <person name="Israni S."/>
            <person name="Pitluck S."/>
            <person name="Chain P."/>
            <person name="Malfatti S."/>
            <person name="Shin M."/>
            <person name="Vergez L."/>
            <person name="Schmutz J."/>
            <person name="Larimer F."/>
            <person name="Land M."/>
            <person name="Hauser L."/>
            <person name="Pelletier D.A."/>
            <person name="Kyrpides N."/>
            <person name="Anderson I."/>
            <person name="Oda Y."/>
            <person name="Harwood C.S."/>
            <person name="Richardson P."/>
        </authorList>
    </citation>
    <scope>NUCLEOTIDE SEQUENCE [LARGE SCALE GENOMIC DNA]</scope>
    <source>
        <strain>HaA2</strain>
    </source>
</reference>
<sequence>MAAAGRSALAIDFVGGAVGYKLRSGAARSHALLKATGMAPGRALQVIDATAGLGRDAFLLASMGASVTLIERSPQVHALLAQGLAAAQAESAELAGVVARMTLIQGDARDLLPTLQADVVTVDPMHPERTKTALVKQEMRLLRDLVGADPDVCELMQAALSARCGRVVLKWPLRAEPLAGVRKPSYQIAGKTVRYDVFVLPRGAAEERAPGADAALNP</sequence>
<protein>
    <recommendedName>
        <fullName evidence="1">Ribosomal RNA small subunit methyltransferase J</fullName>
        <ecNumber evidence="1">2.1.1.242</ecNumber>
    </recommendedName>
    <alternativeName>
        <fullName evidence="1">16S rRNA m2G1516 methyltransferase</fullName>
    </alternativeName>
    <alternativeName>
        <fullName evidence="1">rRNA (guanine-N(2)-)-methyltransferase</fullName>
    </alternativeName>
</protein>
<comment type="function">
    <text evidence="1">Specifically methylates the guanosine in position 1516 of 16S rRNA.</text>
</comment>
<comment type="catalytic activity">
    <reaction evidence="1">
        <text>guanosine(1516) in 16S rRNA + S-adenosyl-L-methionine = N(2)-methylguanosine(1516) in 16S rRNA + S-adenosyl-L-homocysteine + H(+)</text>
        <dbReference type="Rhea" id="RHEA:43220"/>
        <dbReference type="Rhea" id="RHEA-COMP:10412"/>
        <dbReference type="Rhea" id="RHEA-COMP:10413"/>
        <dbReference type="ChEBI" id="CHEBI:15378"/>
        <dbReference type="ChEBI" id="CHEBI:57856"/>
        <dbReference type="ChEBI" id="CHEBI:59789"/>
        <dbReference type="ChEBI" id="CHEBI:74269"/>
        <dbReference type="ChEBI" id="CHEBI:74481"/>
        <dbReference type="EC" id="2.1.1.242"/>
    </reaction>
</comment>
<comment type="subcellular location">
    <subcellularLocation>
        <location evidence="1">Cytoplasm</location>
    </subcellularLocation>
</comment>
<comment type="similarity">
    <text evidence="1">Belongs to the methyltransferase superfamily. RsmJ family.</text>
</comment>
<gene>
    <name evidence="1" type="primary">rsmJ</name>
    <name type="ordered locus">RPB_2042</name>
</gene>
<dbReference type="EC" id="2.1.1.242" evidence="1"/>
<dbReference type="EMBL" id="CP000250">
    <property type="protein sequence ID" value="ABD06749.1"/>
    <property type="molecule type" value="Genomic_DNA"/>
</dbReference>
<dbReference type="RefSeq" id="WP_011440937.1">
    <property type="nucleotide sequence ID" value="NC_007778.1"/>
</dbReference>
<dbReference type="SMR" id="Q2IYG1"/>
<dbReference type="STRING" id="316058.RPB_2042"/>
<dbReference type="KEGG" id="rpb:RPB_2042"/>
<dbReference type="eggNOG" id="COG0500">
    <property type="taxonomic scope" value="Bacteria"/>
</dbReference>
<dbReference type="HOGENOM" id="CLU_076324_0_0_5"/>
<dbReference type="OrthoDB" id="3191794at2"/>
<dbReference type="Proteomes" id="UP000008809">
    <property type="component" value="Chromosome"/>
</dbReference>
<dbReference type="GO" id="GO:0005737">
    <property type="term" value="C:cytoplasm"/>
    <property type="evidence" value="ECO:0007669"/>
    <property type="project" value="UniProtKB-SubCell"/>
</dbReference>
<dbReference type="GO" id="GO:0008990">
    <property type="term" value="F:rRNA (guanine-N2-)-methyltransferase activity"/>
    <property type="evidence" value="ECO:0007669"/>
    <property type="project" value="UniProtKB-UniRule"/>
</dbReference>
<dbReference type="Gene3D" id="3.40.50.150">
    <property type="entry name" value="Vaccinia Virus protein VP39"/>
    <property type="match status" value="1"/>
</dbReference>
<dbReference type="HAMAP" id="MF_01523">
    <property type="entry name" value="16SrRNA_methyltr_J"/>
    <property type="match status" value="1"/>
</dbReference>
<dbReference type="InterPro" id="IPR007536">
    <property type="entry name" value="16SrRNA_methylTrfase_J"/>
</dbReference>
<dbReference type="InterPro" id="IPR029063">
    <property type="entry name" value="SAM-dependent_MTases_sf"/>
</dbReference>
<dbReference type="PANTHER" id="PTHR36112">
    <property type="entry name" value="RIBOSOMAL RNA SMALL SUBUNIT METHYLTRANSFERASE J"/>
    <property type="match status" value="1"/>
</dbReference>
<dbReference type="PANTHER" id="PTHR36112:SF1">
    <property type="entry name" value="RIBOSOMAL RNA SMALL SUBUNIT METHYLTRANSFERASE J"/>
    <property type="match status" value="1"/>
</dbReference>
<dbReference type="Pfam" id="PF04445">
    <property type="entry name" value="SAM_MT"/>
    <property type="match status" value="1"/>
</dbReference>
<dbReference type="SUPFAM" id="SSF53335">
    <property type="entry name" value="S-adenosyl-L-methionine-dependent methyltransferases"/>
    <property type="match status" value="1"/>
</dbReference>
<keyword id="KW-0963">Cytoplasm</keyword>
<keyword id="KW-0489">Methyltransferase</keyword>
<keyword id="KW-1185">Reference proteome</keyword>
<keyword id="KW-0698">rRNA processing</keyword>
<keyword id="KW-0949">S-adenosyl-L-methionine</keyword>
<keyword id="KW-0808">Transferase</keyword>
<proteinExistence type="inferred from homology"/>
<organism>
    <name type="scientific">Rhodopseudomonas palustris (strain HaA2)</name>
    <dbReference type="NCBI Taxonomy" id="316058"/>
    <lineage>
        <taxon>Bacteria</taxon>
        <taxon>Pseudomonadati</taxon>
        <taxon>Pseudomonadota</taxon>
        <taxon>Alphaproteobacteria</taxon>
        <taxon>Hyphomicrobiales</taxon>
        <taxon>Nitrobacteraceae</taxon>
        <taxon>Rhodopseudomonas</taxon>
    </lineage>
</organism>
<accession>Q2IYG1</accession>